<sequence length="695" mass="78173">MSLLLVSLLAFLTLGSGCHHRICHCSNGVFLCQESKVTEIPPDLPRNAVELRFVLTKLRVIPKGAFSGFGDLEKIEISQNDVLEVIEANVFSNLPKLHEIRIEKANNLLYIDPDAFQNLPNLRYLLISNTGVKHLPAVHKIQSLQKVLLDIQDNINIHTVERNSFVGLSFESMILWLSKNGIREIHNCAFNGTQLDELNLSDNDNLEELPNDVFQGASGPVILDISRTRIHSLPSYGLENLKKLRAKSTYNLKKLPSLEKFVTLMEASLTYPSHCCAFANWRRQISDLHPICNKSILRQEVDVMTQARGQRVSLAEDGESSLAKEFDTMYSEFDYDLCNEVVDVICSPEPDTFNPCEDIMGHDILRVLIWFISILAITGNIIVLVILITSQYKLTVPRFLMCNLAFADLCIGIYLLLIASVDIHTKTQYHNYAIDWQTGAGCDAAGFFTVFASELSVYTLTAITLERWHTITHAMQLQCKVQLRHAASIMLVGWIFAFTVALFPIFGISSYMKVSICLPMDIDSPLSQLYVVSLLVLNVLAFVVICGCYTHIYLTVRNPNIMSSSSDTKIAKRMAMLIFTDFLCMAPISFFAISASLKVPLITVSKSKILLVLFYPINSCANPFLYAIFTKNFRRDVFILLSKFGCYEMQAQTYRTENLSTAHNIHPRNGHCPPAPRITNSSSYTLIPLSRLAQN</sequence>
<dbReference type="EMBL" id="L31966">
    <property type="protein sequence ID" value="AAA86933.1"/>
    <property type="molecule type" value="mRNA"/>
</dbReference>
<dbReference type="EMBL" id="AF025377">
    <property type="protein sequence ID" value="AAC24981.1"/>
    <property type="molecule type" value="mRNA"/>
</dbReference>
<dbReference type="PIR" id="JC4301">
    <property type="entry name" value="JC4301"/>
</dbReference>
<dbReference type="RefSeq" id="NP_999551.2">
    <property type="nucleotide sequence ID" value="NM_214386.3"/>
</dbReference>
<dbReference type="SMR" id="P49059"/>
<dbReference type="FunCoup" id="P49059">
    <property type="interactions" value="242"/>
</dbReference>
<dbReference type="STRING" id="9823.ENSSSCP00000020856"/>
<dbReference type="GlyCosmos" id="P49059">
    <property type="glycosylation" value="3 sites, No reported glycans"/>
</dbReference>
<dbReference type="GlyGen" id="P49059">
    <property type="glycosylation" value="3 sites"/>
</dbReference>
<dbReference type="PaxDb" id="9823-ENSSSCP00000020856"/>
<dbReference type="GeneID" id="397679"/>
<dbReference type="KEGG" id="ssc:397679"/>
<dbReference type="CTD" id="2492"/>
<dbReference type="eggNOG" id="KOG2087">
    <property type="taxonomic scope" value="Eukaryota"/>
</dbReference>
<dbReference type="InParanoid" id="P49059"/>
<dbReference type="OrthoDB" id="5981530at2759"/>
<dbReference type="SABIO-RK" id="P49059"/>
<dbReference type="Proteomes" id="UP000008227">
    <property type="component" value="Unplaced"/>
</dbReference>
<dbReference type="Proteomes" id="UP000314985">
    <property type="component" value="Unplaced"/>
</dbReference>
<dbReference type="Proteomes" id="UP000694570">
    <property type="component" value="Unplaced"/>
</dbReference>
<dbReference type="Proteomes" id="UP000694571">
    <property type="component" value="Unplaced"/>
</dbReference>
<dbReference type="Proteomes" id="UP000694720">
    <property type="component" value="Unplaced"/>
</dbReference>
<dbReference type="Proteomes" id="UP000694722">
    <property type="component" value="Unplaced"/>
</dbReference>
<dbReference type="Proteomes" id="UP000694723">
    <property type="component" value="Unplaced"/>
</dbReference>
<dbReference type="Proteomes" id="UP000694724">
    <property type="component" value="Unplaced"/>
</dbReference>
<dbReference type="Proteomes" id="UP000694725">
    <property type="component" value="Unplaced"/>
</dbReference>
<dbReference type="Proteomes" id="UP000694726">
    <property type="component" value="Unplaced"/>
</dbReference>
<dbReference type="Proteomes" id="UP000694727">
    <property type="component" value="Unplaced"/>
</dbReference>
<dbReference type="Proteomes" id="UP000694728">
    <property type="component" value="Unplaced"/>
</dbReference>
<dbReference type="GO" id="GO:0016020">
    <property type="term" value="C:membrane"/>
    <property type="evidence" value="ECO:0000250"/>
    <property type="project" value="UniProtKB"/>
</dbReference>
<dbReference type="GO" id="GO:0005886">
    <property type="term" value="C:plasma membrane"/>
    <property type="evidence" value="ECO:0000250"/>
    <property type="project" value="UniProtKB"/>
</dbReference>
<dbReference type="GO" id="GO:0043235">
    <property type="term" value="C:receptor complex"/>
    <property type="evidence" value="ECO:0000250"/>
    <property type="project" value="UniProtKB"/>
</dbReference>
<dbReference type="GO" id="GO:0004963">
    <property type="term" value="F:follicle-stimulating hormone receptor activity"/>
    <property type="evidence" value="ECO:0000250"/>
    <property type="project" value="UniProtKB"/>
</dbReference>
<dbReference type="GO" id="GO:0008528">
    <property type="term" value="F:G protein-coupled peptide receptor activity"/>
    <property type="evidence" value="ECO:0000318"/>
    <property type="project" value="GO_Central"/>
</dbReference>
<dbReference type="GO" id="GO:0007189">
    <property type="term" value="P:adenylate cyclase-activating G protein-coupled receptor signaling pathway"/>
    <property type="evidence" value="ECO:0000318"/>
    <property type="project" value="GO_Central"/>
</dbReference>
<dbReference type="GO" id="GO:0071372">
    <property type="term" value="P:cellular response to follicle-stimulating hormone stimulus"/>
    <property type="evidence" value="ECO:0000250"/>
    <property type="project" value="UniProtKB"/>
</dbReference>
<dbReference type="GO" id="GO:0042699">
    <property type="term" value="P:follicle-stimulating hormone signaling pathway"/>
    <property type="evidence" value="ECO:0000250"/>
    <property type="project" value="UniProtKB"/>
</dbReference>
<dbReference type="GO" id="GO:0007186">
    <property type="term" value="P:G protein-coupled receptor signaling pathway"/>
    <property type="evidence" value="ECO:0000250"/>
    <property type="project" value="UniProtKB"/>
</dbReference>
<dbReference type="GO" id="GO:0009755">
    <property type="term" value="P:hormone-mediated signaling pathway"/>
    <property type="evidence" value="ECO:0000318"/>
    <property type="project" value="GO_Central"/>
</dbReference>
<dbReference type="GO" id="GO:0008584">
    <property type="term" value="P:male gonad development"/>
    <property type="evidence" value="ECO:0000318"/>
    <property type="project" value="GO_Central"/>
</dbReference>
<dbReference type="GO" id="GO:0070374">
    <property type="term" value="P:positive regulation of ERK1 and ERK2 cascade"/>
    <property type="evidence" value="ECO:0000250"/>
    <property type="project" value="UniProtKB"/>
</dbReference>
<dbReference type="GO" id="GO:0051897">
    <property type="term" value="P:positive regulation of phosphatidylinositol 3-kinase/protein kinase B signal transduction"/>
    <property type="evidence" value="ECO:0000250"/>
    <property type="project" value="UniProtKB"/>
</dbReference>
<dbReference type="GO" id="GO:0010738">
    <property type="term" value="P:regulation of protein kinase A signaling"/>
    <property type="evidence" value="ECO:0000250"/>
    <property type="project" value="UniProtKB"/>
</dbReference>
<dbReference type="FunFam" id="1.20.1070.10:FF:000019">
    <property type="entry name" value="Lutropin-choriogonadotropic hormone receptor"/>
    <property type="match status" value="1"/>
</dbReference>
<dbReference type="Gene3D" id="1.20.1070.10">
    <property type="entry name" value="Rhodopsin 7-helix transmembrane proteins"/>
    <property type="match status" value="1"/>
</dbReference>
<dbReference type="Gene3D" id="3.80.10.10">
    <property type="entry name" value="Ribonuclease Inhibitor"/>
    <property type="match status" value="1"/>
</dbReference>
<dbReference type="InterPro" id="IPR002272">
    <property type="entry name" value="FSH_rcpt"/>
</dbReference>
<dbReference type="InterPro" id="IPR024635">
    <property type="entry name" value="GnHR_TM"/>
</dbReference>
<dbReference type="InterPro" id="IPR000276">
    <property type="entry name" value="GPCR_Rhodpsn"/>
</dbReference>
<dbReference type="InterPro" id="IPR017452">
    <property type="entry name" value="GPCR_Rhodpsn_7TM"/>
</dbReference>
<dbReference type="InterPro" id="IPR002131">
    <property type="entry name" value="Gphrmn_rcpt_fam"/>
</dbReference>
<dbReference type="InterPro" id="IPR026906">
    <property type="entry name" value="LRR_5"/>
</dbReference>
<dbReference type="InterPro" id="IPR032675">
    <property type="entry name" value="LRR_dom_sf"/>
</dbReference>
<dbReference type="InterPro" id="IPR000372">
    <property type="entry name" value="LRRNT"/>
</dbReference>
<dbReference type="PANTHER" id="PTHR24372:SF5">
    <property type="entry name" value="FOLLICLE-STIMULATING HORMONE RECEPTOR"/>
    <property type="match status" value="1"/>
</dbReference>
<dbReference type="PANTHER" id="PTHR24372">
    <property type="entry name" value="GLYCOPROTEIN HORMONE RECEPTOR"/>
    <property type="match status" value="1"/>
</dbReference>
<dbReference type="Pfam" id="PF00001">
    <property type="entry name" value="7tm_1"/>
    <property type="match status" value="1"/>
</dbReference>
<dbReference type="Pfam" id="PF12369">
    <property type="entry name" value="GnHR_trans"/>
    <property type="match status" value="1"/>
</dbReference>
<dbReference type="Pfam" id="PF13306">
    <property type="entry name" value="LRR_5"/>
    <property type="match status" value="2"/>
</dbReference>
<dbReference type="Pfam" id="PF01462">
    <property type="entry name" value="LRRNT"/>
    <property type="match status" value="1"/>
</dbReference>
<dbReference type="PRINTS" id="PR01143">
    <property type="entry name" value="FSHRECEPTOR"/>
</dbReference>
<dbReference type="PRINTS" id="PR00373">
    <property type="entry name" value="GLYCHORMONER"/>
</dbReference>
<dbReference type="PRINTS" id="PR00237">
    <property type="entry name" value="GPCRRHODOPSN"/>
</dbReference>
<dbReference type="SMART" id="SM00013">
    <property type="entry name" value="LRRNT"/>
    <property type="match status" value="1"/>
</dbReference>
<dbReference type="SUPFAM" id="SSF81321">
    <property type="entry name" value="Family A G protein-coupled receptor-like"/>
    <property type="match status" value="1"/>
</dbReference>
<dbReference type="SUPFAM" id="SSF52058">
    <property type="entry name" value="L domain-like"/>
    <property type="match status" value="1"/>
</dbReference>
<dbReference type="PROSITE" id="PS00237">
    <property type="entry name" value="G_PROTEIN_RECEP_F1_1"/>
    <property type="match status" value="1"/>
</dbReference>
<dbReference type="PROSITE" id="PS50262">
    <property type="entry name" value="G_PROTEIN_RECEP_F1_2"/>
    <property type="match status" value="1"/>
</dbReference>
<comment type="function">
    <text evidence="3">G protein-coupled receptor for follitropin, the follicle-stimulating hormone. Through cAMP production activates the downstream PI3K-AKT and ERK1/ERK2 signaling pathways.</text>
</comment>
<comment type="subunit">
    <text evidence="2 3">Homotrimer. Functions as a homotrimer binding the FSH hormone heterodimer composed of CGA and FSHB (By similarity). Interacts with ARRB2 (By similarity). Interacts with APPL2; interaction is independent of follicle stimulating hormone stimulation (By similarity).</text>
</comment>
<comment type="subcellular location">
    <subcellularLocation>
        <location evidence="3">Cell membrane</location>
        <topology evidence="3">Multi-pass membrane protein</topology>
    </subcellularLocation>
</comment>
<comment type="PTM">
    <text evidence="2">N-glycosylated; indirectly required for FSH-binding, possibly via a conformational change that allows high affinity binding of hormone.</text>
</comment>
<comment type="PTM">
    <text evidence="3">Sulfated.</text>
</comment>
<comment type="similarity">
    <text evidence="5">Belongs to the G-protein coupled receptor 1 family. FSH/LSH/TSH subfamily.</text>
</comment>
<keyword id="KW-1003">Cell membrane</keyword>
<keyword id="KW-1015">Disulfide bond</keyword>
<keyword id="KW-0297">G-protein coupled receptor</keyword>
<keyword id="KW-0325">Glycoprotein</keyword>
<keyword id="KW-0433">Leucine-rich repeat</keyword>
<keyword id="KW-0472">Membrane</keyword>
<keyword id="KW-0675">Receptor</keyword>
<keyword id="KW-1185">Reference proteome</keyword>
<keyword id="KW-0677">Repeat</keyword>
<keyword id="KW-0732">Signal</keyword>
<keyword id="KW-0765">Sulfation</keyword>
<keyword id="KW-0807">Transducer</keyword>
<keyword id="KW-0812">Transmembrane</keyword>
<keyword id="KW-1133">Transmembrane helix</keyword>
<name>FSHR_PIG</name>
<accession>P49059</accession>
<accession>O77514</accession>
<reference key="1">
    <citation type="journal article" date="1995" name="Gene">
        <title>The porcine follitropin receptor: cDNA cloning, functional expression and chromosomal localization of the gene.</title>
        <authorList>
            <person name="Remy J.-J."/>
            <person name="Lahbib-Mansais Y."/>
            <person name="Yerle M."/>
            <person name="Bozon V."/>
            <person name="Couture L."/>
            <person name="Pajot E."/>
            <person name="Grebert D."/>
            <person name="Salesse R."/>
        </authorList>
    </citation>
    <scope>NUCLEOTIDE SEQUENCE [MRNA]</scope>
    <source>
        <tissue>Ovary</tissue>
    </source>
</reference>
<reference key="2">
    <citation type="submission" date="1997-09" db="EMBL/GenBank/DDBJ databases">
        <title>Porcine follicle-stimulating hormone receptor.</title>
        <authorList>
            <person name="Wang Y.F."/>
            <person name="Meyer K.B."/>
            <person name="Schmidt K."/>
            <person name="Wan S.J."/>
            <person name="Degen S.J.F."/>
            <person name="la Barbera A.R."/>
        </authorList>
    </citation>
    <scope>NUCLEOTIDE SEQUENCE [MRNA]</scope>
    <source>
        <tissue>Ovary</tissue>
    </source>
</reference>
<proteinExistence type="evidence at transcript level"/>
<organism>
    <name type="scientific">Sus scrofa</name>
    <name type="common">Pig</name>
    <dbReference type="NCBI Taxonomy" id="9823"/>
    <lineage>
        <taxon>Eukaryota</taxon>
        <taxon>Metazoa</taxon>
        <taxon>Chordata</taxon>
        <taxon>Craniata</taxon>
        <taxon>Vertebrata</taxon>
        <taxon>Euteleostomi</taxon>
        <taxon>Mammalia</taxon>
        <taxon>Eutheria</taxon>
        <taxon>Laurasiatheria</taxon>
        <taxon>Artiodactyla</taxon>
        <taxon>Suina</taxon>
        <taxon>Suidae</taxon>
        <taxon>Sus</taxon>
    </lineage>
</organism>
<protein>
    <recommendedName>
        <fullName>Follicle-stimulating hormone receptor</fullName>
        <shortName>FSH-R</shortName>
    </recommendedName>
    <alternativeName>
        <fullName>Follitropin receptor</fullName>
    </alternativeName>
</protein>
<gene>
    <name type="primary">FSHR</name>
</gene>
<feature type="signal peptide" evidence="4">
    <location>
        <begin position="1"/>
        <end position="17"/>
    </location>
</feature>
<feature type="chain" id="PRO_0000012774" description="Follicle-stimulating hormone receptor">
    <location>
        <begin position="18"/>
        <end position="695"/>
    </location>
</feature>
<feature type="topological domain" description="Extracellular" evidence="4">
    <location>
        <begin position="18"/>
        <end position="366"/>
    </location>
</feature>
<feature type="transmembrane region" description="Helical; Name=1" evidence="4">
    <location>
        <begin position="367"/>
        <end position="387"/>
    </location>
</feature>
<feature type="topological domain" description="Cytoplasmic" evidence="4">
    <location>
        <begin position="388"/>
        <end position="398"/>
    </location>
</feature>
<feature type="transmembrane region" description="Helical; Name=2" evidence="4">
    <location>
        <begin position="399"/>
        <end position="421"/>
    </location>
</feature>
<feature type="topological domain" description="Extracellular" evidence="4">
    <location>
        <begin position="422"/>
        <end position="443"/>
    </location>
</feature>
<feature type="transmembrane region" description="Helical; Name=3" evidence="4">
    <location>
        <begin position="444"/>
        <end position="465"/>
    </location>
</feature>
<feature type="topological domain" description="Cytoplasmic" evidence="4">
    <location>
        <begin position="466"/>
        <end position="485"/>
    </location>
</feature>
<feature type="transmembrane region" description="Helical; Name=4" evidence="4">
    <location>
        <begin position="486"/>
        <end position="508"/>
    </location>
</feature>
<feature type="topological domain" description="Extracellular" evidence="4">
    <location>
        <begin position="509"/>
        <end position="528"/>
    </location>
</feature>
<feature type="transmembrane region" description="Helical; Name=5" evidence="4">
    <location>
        <begin position="529"/>
        <end position="550"/>
    </location>
</feature>
<feature type="topological domain" description="Cytoplasmic" evidence="4">
    <location>
        <begin position="551"/>
        <end position="573"/>
    </location>
</feature>
<feature type="transmembrane region" description="Helical; Name=6" evidence="4">
    <location>
        <begin position="574"/>
        <end position="597"/>
    </location>
</feature>
<feature type="topological domain" description="Extracellular" evidence="4">
    <location>
        <begin position="598"/>
        <end position="608"/>
    </location>
</feature>
<feature type="transmembrane region" description="Helical; Name=7" evidence="4">
    <location>
        <begin position="609"/>
        <end position="630"/>
    </location>
</feature>
<feature type="topological domain" description="Cytoplasmic" evidence="4">
    <location>
        <begin position="631"/>
        <end position="695"/>
    </location>
</feature>
<feature type="domain" description="LRRNT">
    <location>
        <begin position="18"/>
        <end position="46"/>
    </location>
</feature>
<feature type="repeat" description="LRR 1">
    <location>
        <begin position="49"/>
        <end position="72"/>
    </location>
</feature>
<feature type="repeat" description="LRR 2">
    <location>
        <begin position="73"/>
        <end position="97"/>
    </location>
</feature>
<feature type="repeat" description="LRR 3">
    <location>
        <begin position="98"/>
        <end position="118"/>
    </location>
</feature>
<feature type="repeat" description="LRR 4">
    <location>
        <begin position="119"/>
        <end position="143"/>
    </location>
</feature>
<feature type="repeat" description="LRR 5">
    <location>
        <begin position="144"/>
        <end position="169"/>
    </location>
</feature>
<feature type="repeat" description="LRR 6">
    <location>
        <begin position="170"/>
        <end position="192"/>
    </location>
</feature>
<feature type="repeat" description="LRR 7">
    <location>
        <begin position="193"/>
        <end position="216"/>
    </location>
</feature>
<feature type="repeat" description="LRR 8">
    <location>
        <begin position="217"/>
        <end position="240"/>
    </location>
</feature>
<feature type="repeat" description="LRR 9">
    <location>
        <begin position="241"/>
        <end position="259"/>
    </location>
</feature>
<feature type="modified residue" description="Sulfotyrosine" evidence="3">
    <location>
        <position position="335"/>
    </location>
</feature>
<feature type="glycosylation site" description="N-linked (GlcNAc...) asparagine" evidence="1">
    <location>
        <position position="191"/>
    </location>
</feature>
<feature type="glycosylation site" description="N-linked (GlcNAc...) asparagine" evidence="4">
    <location>
        <position position="199"/>
    </location>
</feature>
<feature type="glycosylation site" description="N-linked (GlcNAc...) asparagine" evidence="1">
    <location>
        <position position="293"/>
    </location>
</feature>
<feature type="disulfide bond" evidence="5">
    <location>
        <begin position="18"/>
        <end position="25"/>
    </location>
</feature>
<feature type="disulfide bond" evidence="5">
    <location>
        <begin position="23"/>
        <end position="32"/>
    </location>
</feature>
<feature type="disulfide bond" evidence="3">
    <location>
        <begin position="275"/>
        <end position="346"/>
    </location>
</feature>
<feature type="disulfide bond" evidence="3">
    <location>
        <begin position="276"/>
        <end position="356"/>
    </location>
</feature>
<feature type="disulfide bond" evidence="3">
    <location>
        <begin position="276"/>
        <end position="292"/>
    </location>
</feature>
<feature type="disulfide bond" evidence="3">
    <location>
        <begin position="292"/>
        <end position="338"/>
    </location>
</feature>
<feature type="disulfide bond" evidence="5">
    <location>
        <begin position="442"/>
        <end position="517"/>
    </location>
</feature>
<feature type="sequence conflict" description="In Ref. 1; AAA86933." evidence="6" ref="1">
    <original>S</original>
    <variation>A</variation>
    <location>
        <position position="2"/>
    </location>
</feature>
<feature type="sequence conflict" description="In Ref. 1; AAA86933." evidence="6" ref="1">
    <original>T</original>
    <variation>S</variation>
    <location>
        <position position="13"/>
    </location>
</feature>
<feature type="sequence conflict" description="In Ref. 1; AAA86933." evidence="6" ref="1">
    <original>V</original>
    <variation>A</variation>
    <location>
        <position position="60"/>
    </location>
</feature>
<feature type="sequence conflict" description="In Ref. 1; AAA86933." evidence="6" ref="1">
    <original>V</original>
    <variation>M</variation>
    <location>
        <position position="166"/>
    </location>
</feature>
<feature type="sequence conflict" description="In Ref. 1; AAA86933." evidence="6" ref="1">
    <original>Q</original>
    <variation>H</variation>
    <location>
        <position position="215"/>
    </location>
</feature>
<feature type="sequence conflict" description="In Ref. 1; AAA86933." evidence="6" ref="1">
    <original>K</original>
    <variation>R</variation>
    <location>
        <position position="247"/>
    </location>
</feature>
<feature type="sequence conflict" description="In Ref. 1; AAA86933." evidence="6" ref="1">
    <original>S</original>
    <variation>T</variation>
    <location>
        <position position="257"/>
    </location>
</feature>
<feature type="sequence conflict" description="In Ref. 1; AAA86933." evidence="6" ref="1">
    <original>D</original>
    <variation>N</variation>
    <location>
        <position position="334"/>
    </location>
</feature>
<feature type="sequence conflict" description="In Ref. 1; AAA86933." evidence="6" ref="1">
    <original>E</original>
    <variation>K</variation>
    <location>
        <position position="349"/>
    </location>
</feature>
<feature type="sequence conflict" description="In Ref. 1; AAA86933." evidence="6" ref="1">
    <original>T</original>
    <variation>A</variation>
    <location>
        <position position="352"/>
    </location>
</feature>
<feature type="sequence conflict" description="In Ref. 1; AAA86933." evidence="6" ref="1">
    <original>V</original>
    <variation>E</variation>
    <location>
        <position position="383"/>
    </location>
</feature>
<feature type="sequence conflict" description="In Ref. 1; AAA86933." evidence="6" ref="1">
    <original>A</original>
    <variation>T</variation>
    <location>
        <position position="407"/>
    </location>
</feature>
<feature type="sequence conflict" description="In Ref. 1; AAA86933." evidence="6" ref="1">
    <original>V</original>
    <variation>I</variation>
    <location>
        <position position="421"/>
    </location>
</feature>
<feature type="sequence conflict" description="In Ref. 1; AAA86933." evidence="6" ref="1">
    <original>T</original>
    <variation>S</variation>
    <location>
        <position position="427"/>
    </location>
</feature>
<feature type="sequence conflict" description="In Ref. 1; AAA86933." evidence="6" ref="1">
    <original>D</original>
    <variation>N</variation>
    <location>
        <position position="435"/>
    </location>
</feature>
<feature type="sequence conflict" description="In Ref. 1; AAA86933." evidence="6" ref="1">
    <original>L</original>
    <variation>V</variation>
    <location>
        <position position="483"/>
    </location>
</feature>
<feature type="sequence conflict" description="In Ref. 1; AAA86933." evidence="6" ref="1">
    <original>T</original>
    <variation>I</variation>
    <location>
        <position position="550"/>
    </location>
</feature>
<feature type="sequence conflict" description="In Ref. 1; AAA86933." evidence="6" ref="1">
    <original>A</original>
    <variation>V</variation>
    <location>
        <position position="586"/>
    </location>
</feature>
<feature type="sequence conflict" description="In Ref. 1; AAA86933." evidence="6" ref="1">
    <original>S</original>
    <variation>L</variation>
    <location>
        <position position="607"/>
    </location>
</feature>
<feature type="sequence conflict" description="In Ref. 1; AAA86933." evidence="6" ref="1">
    <original>R</original>
    <variation>H</variation>
    <location>
        <position position="691"/>
    </location>
</feature>
<evidence type="ECO:0000250" key="1"/>
<evidence type="ECO:0000250" key="2">
    <source>
        <dbReference type="UniProtKB" id="P20395"/>
    </source>
</evidence>
<evidence type="ECO:0000250" key="3">
    <source>
        <dbReference type="UniProtKB" id="P23945"/>
    </source>
</evidence>
<evidence type="ECO:0000255" key="4"/>
<evidence type="ECO:0000255" key="5">
    <source>
        <dbReference type="PROSITE-ProRule" id="PRU00521"/>
    </source>
</evidence>
<evidence type="ECO:0000305" key="6"/>